<reference key="1">
    <citation type="journal article" date="2002" name="Proc. Natl. Acad. Sci. U.S.A.">
        <title>Genome sequence of a serotype M3 strain of group A Streptococcus: phage-encoded toxins, the high-virulence phenotype, and clone emergence.</title>
        <authorList>
            <person name="Beres S.B."/>
            <person name="Sylva G.L."/>
            <person name="Barbian K.D."/>
            <person name="Lei B."/>
            <person name="Hoff J.S."/>
            <person name="Mammarella N.D."/>
            <person name="Liu M.-Y."/>
            <person name="Smoot J.C."/>
            <person name="Porcella S.F."/>
            <person name="Parkins L.D."/>
            <person name="Campbell D.S."/>
            <person name="Smith T.M."/>
            <person name="McCormick J.K."/>
            <person name="Leung D.Y.M."/>
            <person name="Schlievert P.M."/>
            <person name="Musser J.M."/>
        </authorList>
    </citation>
    <scope>NUCLEOTIDE SEQUENCE [LARGE SCALE GENOMIC DNA]</scope>
    <source>
        <strain>ATCC BAA-595 / MGAS315</strain>
    </source>
</reference>
<sequence>MSQEIYDYANQLERAVRALPEYQKVLEVKEAIQADASTSQLFDEFVAMQEKIQGMMQSGQMPTAEEQTSIQELSQKIEANDQLKAYFEAQQALSVYMSDIERIVFAPLKDLVK</sequence>
<gene>
    <name type="ordered locus">SpyM3_0545</name>
</gene>
<comment type="similarity">
    <text evidence="1">Belongs to the UPF0342 family.</text>
</comment>
<feature type="chain" id="PRO_0000109997" description="UPF0342 protein SpyM3_0545">
    <location>
        <begin position="1"/>
        <end position="113"/>
    </location>
</feature>
<evidence type="ECO:0000255" key="1">
    <source>
        <dbReference type="HAMAP-Rule" id="MF_01526"/>
    </source>
</evidence>
<accession>P0DH12</accession>
<accession>Q79WT0</accession>
<accession>Q8K7Z5</accession>
<name>Y545_STRP3</name>
<dbReference type="EMBL" id="AE014074">
    <property type="protein sequence ID" value="AAM79152.1"/>
    <property type="molecule type" value="Genomic_DNA"/>
</dbReference>
<dbReference type="RefSeq" id="WP_011054350.1">
    <property type="nucleotide sequence ID" value="NC_004070.1"/>
</dbReference>
<dbReference type="SMR" id="P0DH12"/>
<dbReference type="KEGG" id="spg:SpyM3_0545"/>
<dbReference type="HOGENOM" id="CLU_140243_2_0_9"/>
<dbReference type="Proteomes" id="UP000000564">
    <property type="component" value="Chromosome"/>
</dbReference>
<dbReference type="Gene3D" id="1.20.1500.10">
    <property type="entry name" value="YheA/YmcA-like"/>
    <property type="match status" value="1"/>
</dbReference>
<dbReference type="HAMAP" id="MF_01526">
    <property type="entry name" value="UPF0342"/>
    <property type="match status" value="1"/>
</dbReference>
<dbReference type="InterPro" id="IPR010368">
    <property type="entry name" value="Com_YlbF"/>
</dbReference>
<dbReference type="InterPro" id="IPR023378">
    <property type="entry name" value="YheA/YmcA-like_dom_sf"/>
</dbReference>
<dbReference type="NCBIfam" id="NF010209">
    <property type="entry name" value="PRK13676.1-1"/>
    <property type="match status" value="1"/>
</dbReference>
<dbReference type="Pfam" id="PF06133">
    <property type="entry name" value="Com_YlbF"/>
    <property type="match status" value="1"/>
</dbReference>
<dbReference type="SUPFAM" id="SSF158622">
    <property type="entry name" value="YheA/YmcA-like"/>
    <property type="match status" value="1"/>
</dbReference>
<proteinExistence type="inferred from homology"/>
<protein>
    <recommendedName>
        <fullName evidence="1">UPF0342 protein SpyM3_0545</fullName>
    </recommendedName>
</protein>
<organism>
    <name type="scientific">Streptococcus pyogenes serotype M3 (strain ATCC BAA-595 / MGAS315)</name>
    <dbReference type="NCBI Taxonomy" id="198466"/>
    <lineage>
        <taxon>Bacteria</taxon>
        <taxon>Bacillati</taxon>
        <taxon>Bacillota</taxon>
        <taxon>Bacilli</taxon>
        <taxon>Lactobacillales</taxon>
        <taxon>Streptococcaceae</taxon>
        <taxon>Streptococcus</taxon>
    </lineage>
</organism>